<organism>
    <name type="scientific">Escherichia coli (strain ATCC 8739 / DSM 1576 / NBRC 3972 / NCIMB 8545 / WDCM 00012 / Crooks)</name>
    <dbReference type="NCBI Taxonomy" id="481805"/>
    <lineage>
        <taxon>Bacteria</taxon>
        <taxon>Pseudomonadati</taxon>
        <taxon>Pseudomonadota</taxon>
        <taxon>Gammaproteobacteria</taxon>
        <taxon>Enterobacterales</taxon>
        <taxon>Enterobacteriaceae</taxon>
        <taxon>Escherichia</taxon>
    </lineage>
</organism>
<gene>
    <name evidence="1" type="primary">purR</name>
    <name type="ordered locus">EcolC_1971</name>
</gene>
<evidence type="ECO:0000255" key="1">
    <source>
        <dbReference type="HAMAP-Rule" id="MF_01277"/>
    </source>
</evidence>
<feature type="chain" id="PRO_1000085869" description="HTH-type transcriptional repressor PurR">
    <location>
        <begin position="1"/>
        <end position="341"/>
    </location>
</feature>
<feature type="domain" description="HTH lacI-type" evidence="1">
    <location>
        <begin position="2"/>
        <end position="56"/>
    </location>
</feature>
<feature type="DNA-binding region" description="H-T-H motif" evidence="1">
    <location>
        <begin position="4"/>
        <end position="23"/>
    </location>
</feature>
<feature type="DNA-binding region" evidence="1">
    <location>
        <begin position="48"/>
        <end position="56"/>
    </location>
</feature>
<feature type="binding site" evidence="1">
    <location>
        <position position="73"/>
    </location>
    <ligand>
        <name>hypoxanthine</name>
        <dbReference type="ChEBI" id="CHEBI:17368"/>
    </ligand>
</feature>
<feature type="binding site" evidence="1">
    <location>
        <position position="190"/>
    </location>
    <ligand>
        <name>hypoxanthine</name>
        <dbReference type="ChEBI" id="CHEBI:17368"/>
    </ligand>
</feature>
<feature type="binding site" evidence="1">
    <location>
        <position position="192"/>
    </location>
    <ligand>
        <name>hypoxanthine</name>
        <dbReference type="ChEBI" id="CHEBI:17368"/>
    </ligand>
</feature>
<feature type="binding site" evidence="1">
    <location>
        <position position="221"/>
    </location>
    <ligand>
        <name>hypoxanthine</name>
        <dbReference type="ChEBI" id="CHEBI:17368"/>
    </ligand>
</feature>
<feature type="binding site" evidence="1">
    <location>
        <position position="275"/>
    </location>
    <ligand>
        <name>hypoxanthine</name>
        <dbReference type="ChEBI" id="CHEBI:17368"/>
    </ligand>
</feature>
<protein>
    <recommendedName>
        <fullName evidence="1">HTH-type transcriptional repressor PurR</fullName>
    </recommendedName>
    <alternativeName>
        <fullName evidence="1">Pur regulon repressor</fullName>
    </alternativeName>
    <alternativeName>
        <fullName evidence="1">Purine nucleotide synthesis repressor</fullName>
    </alternativeName>
</protein>
<reference key="1">
    <citation type="submission" date="2008-02" db="EMBL/GenBank/DDBJ databases">
        <title>Complete sequence of Escherichia coli C str. ATCC 8739.</title>
        <authorList>
            <person name="Copeland A."/>
            <person name="Lucas S."/>
            <person name="Lapidus A."/>
            <person name="Glavina del Rio T."/>
            <person name="Dalin E."/>
            <person name="Tice H."/>
            <person name="Bruce D."/>
            <person name="Goodwin L."/>
            <person name="Pitluck S."/>
            <person name="Kiss H."/>
            <person name="Brettin T."/>
            <person name="Detter J.C."/>
            <person name="Han C."/>
            <person name="Kuske C.R."/>
            <person name="Schmutz J."/>
            <person name="Larimer F."/>
            <person name="Land M."/>
            <person name="Hauser L."/>
            <person name="Kyrpides N."/>
            <person name="Mikhailova N."/>
            <person name="Ingram L."/>
            <person name="Richardson P."/>
        </authorList>
    </citation>
    <scope>NUCLEOTIDE SEQUENCE [LARGE SCALE GENOMIC DNA]</scope>
    <source>
        <strain>ATCC 8739 / DSM 1576 / NBRC 3972 / NCIMB 8545 / WDCM 00012 / Crooks</strain>
    </source>
</reference>
<proteinExistence type="inferred from homology"/>
<keyword id="KW-0238">DNA-binding</keyword>
<keyword id="KW-0658">Purine biosynthesis</keyword>
<keyword id="KW-0678">Repressor</keyword>
<keyword id="KW-0804">Transcription</keyword>
<keyword id="KW-0805">Transcription regulation</keyword>
<sequence>MATIKDVAKRANVSTTTVSHVINKTRFVAEETRNAVWAAIKELHYSPSAVARSLKVNHTKSIGLLATSSEAAYFAEIIEAVEKNCFQKGYTLILGNAWNNLEKQRAYLSMMAQKRVDGLLVMCSEYPEPLLAMLEEYRHIPMVVMDWGEAKADFTDAVIDNAFEGGYMAGRYLIERGHREIGVIPGPLERNTGAGRLAGFMKAMEEAMIKVPESWIVQGDFEPESGYRAMQQILSQPHRPTAVFCGGDIMAMGALCAADEMGLRVPQDVSLIGYDNVRNARYFTPALTTIHQPKDSLGETAFNMLLDRIVNKREEPQSIEVHPRLIERRSVADGPFRDYRR</sequence>
<name>PURR_ECOLC</name>
<comment type="function">
    <text evidence="1">Is the main repressor of the genes involved in the de novo synthesis of purine nucleotides, regulating purB, purC, purEK, purF, purHD, purL, purMN and guaBA expression. PurR is allosterically activated to bind its cognate DNA by binding the purine corepressors, hypoxanthine or guanine, thereby effecting transcription repression.</text>
</comment>
<comment type="pathway">
    <text>Purine metabolism; purine nucleotide biosynthesis [regulation].</text>
</comment>
<comment type="subunit">
    <text evidence="1">Homodimer.</text>
</comment>
<comment type="domain">
    <text evidence="1">Consists of two structural and functional domains: an N-terminal DNA-binding domain, approximately the first 60 residues, and a larger C-terminal domain, approximately 280 residues, which imparts the function of corepressor binding and oligomerization.</text>
</comment>
<accession>B1IQ96</accession>
<dbReference type="EMBL" id="CP000946">
    <property type="protein sequence ID" value="ACA77617.1"/>
    <property type="molecule type" value="Genomic_DNA"/>
</dbReference>
<dbReference type="RefSeq" id="WP_000190982.1">
    <property type="nucleotide sequence ID" value="NZ_MTFT01000006.1"/>
</dbReference>
<dbReference type="SMR" id="B1IQ96"/>
<dbReference type="GeneID" id="75204504"/>
<dbReference type="KEGG" id="ecl:EcolC_1971"/>
<dbReference type="HOGENOM" id="CLU_037628_6_2_6"/>
<dbReference type="UniPathway" id="UPA00488"/>
<dbReference type="GO" id="GO:0003700">
    <property type="term" value="F:DNA-binding transcription factor activity"/>
    <property type="evidence" value="ECO:0007669"/>
    <property type="project" value="TreeGrafter"/>
</dbReference>
<dbReference type="GO" id="GO:0000976">
    <property type="term" value="F:transcription cis-regulatory region binding"/>
    <property type="evidence" value="ECO:0007669"/>
    <property type="project" value="TreeGrafter"/>
</dbReference>
<dbReference type="GO" id="GO:0045892">
    <property type="term" value="P:negative regulation of DNA-templated transcription"/>
    <property type="evidence" value="ECO:0007669"/>
    <property type="project" value="UniProtKB-UniRule"/>
</dbReference>
<dbReference type="GO" id="GO:0006164">
    <property type="term" value="P:purine nucleotide biosynthetic process"/>
    <property type="evidence" value="ECO:0007669"/>
    <property type="project" value="UniProtKB-UniPathway"/>
</dbReference>
<dbReference type="CDD" id="cd01392">
    <property type="entry name" value="HTH_LacI"/>
    <property type="match status" value="1"/>
</dbReference>
<dbReference type="CDD" id="cd06275">
    <property type="entry name" value="PBP1_PurR"/>
    <property type="match status" value="1"/>
</dbReference>
<dbReference type="FunFam" id="1.10.260.40:FF:000002">
    <property type="entry name" value="HTH-type transcriptional repressor PurR"/>
    <property type="match status" value="1"/>
</dbReference>
<dbReference type="FunFam" id="3.40.50.2300:FF:000045">
    <property type="entry name" value="HTH-type transcriptional repressor PurR"/>
    <property type="match status" value="1"/>
</dbReference>
<dbReference type="Gene3D" id="3.40.50.2300">
    <property type="match status" value="2"/>
</dbReference>
<dbReference type="Gene3D" id="1.10.260.40">
    <property type="entry name" value="lambda repressor-like DNA-binding domains"/>
    <property type="match status" value="1"/>
</dbReference>
<dbReference type="HAMAP" id="MF_01277">
    <property type="entry name" value="HTH_type_PurR"/>
    <property type="match status" value="1"/>
</dbReference>
<dbReference type="InterPro" id="IPR000843">
    <property type="entry name" value="HTH_LacI"/>
</dbReference>
<dbReference type="InterPro" id="IPR046335">
    <property type="entry name" value="LacI/GalR-like_sensor"/>
</dbReference>
<dbReference type="InterPro" id="IPR010982">
    <property type="entry name" value="Lambda_DNA-bd_dom_sf"/>
</dbReference>
<dbReference type="InterPro" id="IPR028082">
    <property type="entry name" value="Peripla_BP_I"/>
</dbReference>
<dbReference type="InterPro" id="IPR023588">
    <property type="entry name" value="Tscrpt_reg_HTH_PurR"/>
</dbReference>
<dbReference type="NCBIfam" id="NF007979">
    <property type="entry name" value="PRK10703.1"/>
    <property type="match status" value="1"/>
</dbReference>
<dbReference type="PANTHER" id="PTHR30146:SF148">
    <property type="entry name" value="HTH-TYPE TRANSCRIPTIONAL REPRESSOR PURR-RELATED"/>
    <property type="match status" value="1"/>
</dbReference>
<dbReference type="PANTHER" id="PTHR30146">
    <property type="entry name" value="LACI-RELATED TRANSCRIPTIONAL REPRESSOR"/>
    <property type="match status" value="1"/>
</dbReference>
<dbReference type="Pfam" id="PF00356">
    <property type="entry name" value="LacI"/>
    <property type="match status" value="1"/>
</dbReference>
<dbReference type="Pfam" id="PF13377">
    <property type="entry name" value="Peripla_BP_3"/>
    <property type="match status" value="1"/>
</dbReference>
<dbReference type="PRINTS" id="PR00036">
    <property type="entry name" value="HTHLACI"/>
</dbReference>
<dbReference type="SMART" id="SM00354">
    <property type="entry name" value="HTH_LACI"/>
    <property type="match status" value="1"/>
</dbReference>
<dbReference type="SUPFAM" id="SSF47413">
    <property type="entry name" value="lambda repressor-like DNA-binding domains"/>
    <property type="match status" value="1"/>
</dbReference>
<dbReference type="SUPFAM" id="SSF53822">
    <property type="entry name" value="Periplasmic binding protein-like I"/>
    <property type="match status" value="1"/>
</dbReference>
<dbReference type="PROSITE" id="PS00356">
    <property type="entry name" value="HTH_LACI_1"/>
    <property type="match status" value="1"/>
</dbReference>
<dbReference type="PROSITE" id="PS50932">
    <property type="entry name" value="HTH_LACI_2"/>
    <property type="match status" value="1"/>
</dbReference>